<feature type="chain" id="PRO_1000119459" description="Homoserine O-succinyltransferase">
    <location>
        <begin position="1"/>
        <end position="379"/>
    </location>
</feature>
<feature type="domain" description="AB hydrolase-1" evidence="1">
    <location>
        <begin position="51"/>
        <end position="360"/>
    </location>
</feature>
<feature type="active site" description="Nucleophile" evidence="1">
    <location>
        <position position="157"/>
    </location>
</feature>
<feature type="active site" evidence="1">
    <location>
        <position position="323"/>
    </location>
</feature>
<feature type="active site" evidence="1">
    <location>
        <position position="356"/>
    </location>
</feature>
<feature type="binding site" evidence="1">
    <location>
        <position position="227"/>
    </location>
    <ligand>
        <name>substrate</name>
    </ligand>
</feature>
<feature type="binding site" evidence="1">
    <location>
        <position position="357"/>
    </location>
    <ligand>
        <name>substrate</name>
    </ligand>
</feature>
<feature type="site" description="Important for acyl-CoA specificity" evidence="1">
    <location>
        <position position="325"/>
    </location>
</feature>
<proteinExistence type="inferred from homology"/>
<protein>
    <recommendedName>
        <fullName evidence="1">Homoserine O-succinyltransferase</fullName>
        <shortName evidence="1">HST</shortName>
        <ecNumber evidence="1">2.3.1.46</ecNumber>
    </recommendedName>
    <alternativeName>
        <fullName evidence="1">Homoserine transsuccinylase</fullName>
        <shortName evidence="1">HTS</shortName>
    </alternativeName>
</protein>
<gene>
    <name evidence="1" type="primary">metXS</name>
    <name type="ordered locus">PLES_03871</name>
</gene>
<dbReference type="EC" id="2.3.1.46" evidence="1"/>
<dbReference type="EMBL" id="FM209186">
    <property type="protein sequence ID" value="CAW25114.1"/>
    <property type="molecule type" value="Genomic_DNA"/>
</dbReference>
<dbReference type="RefSeq" id="WP_012613499.1">
    <property type="nucleotide sequence ID" value="NC_011770.1"/>
</dbReference>
<dbReference type="SMR" id="B7V3X6"/>
<dbReference type="ESTHER" id="pseae-metx">
    <property type="family name" value="Homoserine_transacetylase"/>
</dbReference>
<dbReference type="KEGG" id="pag:PLES_03871"/>
<dbReference type="HOGENOM" id="CLU_028760_1_2_6"/>
<dbReference type="UniPathway" id="UPA00051">
    <property type="reaction ID" value="UER00075"/>
</dbReference>
<dbReference type="GO" id="GO:0005737">
    <property type="term" value="C:cytoplasm"/>
    <property type="evidence" value="ECO:0007669"/>
    <property type="project" value="UniProtKB-SubCell"/>
</dbReference>
<dbReference type="GO" id="GO:0004414">
    <property type="term" value="F:homoserine O-acetyltransferase activity"/>
    <property type="evidence" value="ECO:0007669"/>
    <property type="project" value="TreeGrafter"/>
</dbReference>
<dbReference type="GO" id="GO:0008899">
    <property type="term" value="F:homoserine O-succinyltransferase activity"/>
    <property type="evidence" value="ECO:0007669"/>
    <property type="project" value="UniProtKB-UniRule"/>
</dbReference>
<dbReference type="GO" id="GO:0009092">
    <property type="term" value="P:homoserine metabolic process"/>
    <property type="evidence" value="ECO:0007669"/>
    <property type="project" value="TreeGrafter"/>
</dbReference>
<dbReference type="GO" id="GO:0009086">
    <property type="term" value="P:methionine biosynthetic process"/>
    <property type="evidence" value="ECO:0007669"/>
    <property type="project" value="UniProtKB-UniRule"/>
</dbReference>
<dbReference type="FunFam" id="1.10.1740.110:FF:000001">
    <property type="entry name" value="Homoserine O-acetyltransferase"/>
    <property type="match status" value="1"/>
</dbReference>
<dbReference type="Gene3D" id="1.10.1740.110">
    <property type="match status" value="1"/>
</dbReference>
<dbReference type="Gene3D" id="3.40.50.1820">
    <property type="entry name" value="alpha/beta hydrolase"/>
    <property type="match status" value="1"/>
</dbReference>
<dbReference type="HAMAP" id="MF_00296">
    <property type="entry name" value="MetX_acyltransf"/>
    <property type="match status" value="1"/>
</dbReference>
<dbReference type="InterPro" id="IPR000073">
    <property type="entry name" value="AB_hydrolase_1"/>
</dbReference>
<dbReference type="InterPro" id="IPR029058">
    <property type="entry name" value="AB_hydrolase_fold"/>
</dbReference>
<dbReference type="InterPro" id="IPR008220">
    <property type="entry name" value="HAT_MetX-like"/>
</dbReference>
<dbReference type="NCBIfam" id="TIGR01392">
    <property type="entry name" value="homoserO_Ac_trn"/>
    <property type="match status" value="1"/>
</dbReference>
<dbReference type="NCBIfam" id="NF001209">
    <property type="entry name" value="PRK00175.1"/>
    <property type="match status" value="1"/>
</dbReference>
<dbReference type="PANTHER" id="PTHR32268">
    <property type="entry name" value="HOMOSERINE O-ACETYLTRANSFERASE"/>
    <property type="match status" value="1"/>
</dbReference>
<dbReference type="PANTHER" id="PTHR32268:SF11">
    <property type="entry name" value="HOMOSERINE O-ACETYLTRANSFERASE"/>
    <property type="match status" value="1"/>
</dbReference>
<dbReference type="Pfam" id="PF00561">
    <property type="entry name" value="Abhydrolase_1"/>
    <property type="match status" value="1"/>
</dbReference>
<dbReference type="PIRSF" id="PIRSF000443">
    <property type="entry name" value="Homoser_Ac_trans"/>
    <property type="match status" value="1"/>
</dbReference>
<dbReference type="SUPFAM" id="SSF53474">
    <property type="entry name" value="alpha/beta-Hydrolases"/>
    <property type="match status" value="1"/>
</dbReference>
<evidence type="ECO:0000255" key="1">
    <source>
        <dbReference type="HAMAP-Rule" id="MF_00296"/>
    </source>
</evidence>
<name>METXS_PSEA8</name>
<sequence>MPTVFPDDSVGLVSPQTLHFNEPLELTSGKSLAEYDLVIETYGELNATQSNAVLICHALSGHHHAAGYHSVDERKPGWWDSCIGPGKPIDTRKFFVVALNNLGGCNGSSGPASINPATGKVYGADFPMVTVEDWVHSQARLADRLGIRQWAAVVGGSLGGMQALQWTISYPERVRHCLCIASAPKLSAQNIAFNEVARQATLSDPEFLGGYFQEQGVIPKRGLKLARMVGHITYLSDDAMGAKFGRVLKTEKLNYDLHSVEFQVESYLRYQGEEFSTRFDANTYLLMTKALDYFDPAAAHGDDLVRTLEGVEADFCLMSFTTDWRFSPARSREIVDALIAAKKNVSYLEIDAPQGHDAFLMPIPRYLQAFSGYMNRISV</sequence>
<comment type="function">
    <text evidence="1">Transfers a succinyl group from succinyl-CoA to L-homoserine, forming succinyl-L-homoserine.</text>
</comment>
<comment type="catalytic activity">
    <reaction evidence="1">
        <text>L-homoserine + succinyl-CoA = O-succinyl-L-homoserine + CoA</text>
        <dbReference type="Rhea" id="RHEA:22008"/>
        <dbReference type="ChEBI" id="CHEBI:57287"/>
        <dbReference type="ChEBI" id="CHEBI:57292"/>
        <dbReference type="ChEBI" id="CHEBI:57476"/>
        <dbReference type="ChEBI" id="CHEBI:57661"/>
        <dbReference type="EC" id="2.3.1.46"/>
    </reaction>
</comment>
<comment type="pathway">
    <text evidence="1">Amino-acid biosynthesis; L-methionine biosynthesis via de novo pathway; O-succinyl-L-homoserine from L-homoserine: step 1/1.</text>
</comment>
<comment type="subunit">
    <text evidence="1">Homodimer.</text>
</comment>
<comment type="subcellular location">
    <subcellularLocation>
        <location evidence="1">Cytoplasm</location>
    </subcellularLocation>
</comment>
<comment type="similarity">
    <text evidence="1">Belongs to the AB hydrolase superfamily. MetX family.</text>
</comment>
<accession>B7V3X6</accession>
<keyword id="KW-0012">Acyltransferase</keyword>
<keyword id="KW-0028">Amino-acid biosynthesis</keyword>
<keyword id="KW-0963">Cytoplasm</keyword>
<keyword id="KW-0486">Methionine biosynthesis</keyword>
<keyword id="KW-0808">Transferase</keyword>
<reference key="1">
    <citation type="journal article" date="2009" name="Genome Res.">
        <title>Newly introduced genomic prophage islands are critical determinants of in vivo competitiveness in the Liverpool epidemic strain of Pseudomonas aeruginosa.</title>
        <authorList>
            <person name="Winstanley C."/>
            <person name="Langille M.G.I."/>
            <person name="Fothergill J.L."/>
            <person name="Kukavica-Ibrulj I."/>
            <person name="Paradis-Bleau C."/>
            <person name="Sanschagrin F."/>
            <person name="Thomson N.R."/>
            <person name="Winsor G.L."/>
            <person name="Quail M.A."/>
            <person name="Lennard N."/>
            <person name="Bignell A."/>
            <person name="Clarke L."/>
            <person name="Seeger K."/>
            <person name="Saunders D."/>
            <person name="Harris D."/>
            <person name="Parkhill J."/>
            <person name="Hancock R.E.W."/>
            <person name="Brinkman F.S.L."/>
            <person name="Levesque R.C."/>
        </authorList>
    </citation>
    <scope>NUCLEOTIDE SEQUENCE [LARGE SCALE GENOMIC DNA]</scope>
    <source>
        <strain>LESB58</strain>
    </source>
</reference>
<organism>
    <name type="scientific">Pseudomonas aeruginosa (strain LESB58)</name>
    <dbReference type="NCBI Taxonomy" id="557722"/>
    <lineage>
        <taxon>Bacteria</taxon>
        <taxon>Pseudomonadati</taxon>
        <taxon>Pseudomonadota</taxon>
        <taxon>Gammaproteobacteria</taxon>
        <taxon>Pseudomonadales</taxon>
        <taxon>Pseudomonadaceae</taxon>
        <taxon>Pseudomonas</taxon>
    </lineage>
</organism>